<evidence type="ECO:0000255" key="1">
    <source>
        <dbReference type="HAMAP-Rule" id="MF_00206"/>
    </source>
</evidence>
<evidence type="ECO:0000255" key="2">
    <source>
        <dbReference type="PROSITE-ProRule" id="PRU01266"/>
    </source>
</evidence>
<evidence type="ECO:0000305" key="3"/>
<protein>
    <recommendedName>
        <fullName evidence="1">Lipoyl synthase</fullName>
        <ecNumber evidence="1">2.8.1.8</ecNumber>
    </recommendedName>
    <alternativeName>
        <fullName evidence="1">Lip-syn</fullName>
        <shortName evidence="1">LS</shortName>
    </alternativeName>
    <alternativeName>
        <fullName evidence="1">Lipoate synthase</fullName>
    </alternativeName>
    <alternativeName>
        <fullName evidence="1">Lipoic acid synthase</fullName>
    </alternativeName>
    <alternativeName>
        <fullName evidence="1">Sulfur insertion protein LipA</fullName>
    </alternativeName>
</protein>
<accession>A0RKF7</accession>
<keyword id="KW-0004">4Fe-4S</keyword>
<keyword id="KW-0963">Cytoplasm</keyword>
<keyword id="KW-0408">Iron</keyword>
<keyword id="KW-0411">Iron-sulfur</keyword>
<keyword id="KW-0479">Metal-binding</keyword>
<keyword id="KW-0949">S-adenosyl-L-methionine</keyword>
<keyword id="KW-0808">Transferase</keyword>
<organism>
    <name type="scientific">Bacillus thuringiensis (strain Al Hakam)</name>
    <dbReference type="NCBI Taxonomy" id="412694"/>
    <lineage>
        <taxon>Bacteria</taxon>
        <taxon>Bacillati</taxon>
        <taxon>Bacillota</taxon>
        <taxon>Bacilli</taxon>
        <taxon>Bacillales</taxon>
        <taxon>Bacillaceae</taxon>
        <taxon>Bacillus</taxon>
        <taxon>Bacillus cereus group</taxon>
    </lineage>
</organism>
<dbReference type="EC" id="2.8.1.8" evidence="1"/>
<dbReference type="EMBL" id="CP000485">
    <property type="protein sequence ID" value="ABK87700.1"/>
    <property type="status" value="ALT_INIT"/>
    <property type="molecule type" value="Genomic_DNA"/>
</dbReference>
<dbReference type="RefSeq" id="WP_000166369.1">
    <property type="nucleotide sequence ID" value="NC_008600.1"/>
</dbReference>
<dbReference type="SMR" id="A0RKF7"/>
<dbReference type="GeneID" id="51136693"/>
<dbReference type="KEGG" id="btl:BALH_4504"/>
<dbReference type="HOGENOM" id="CLU_033144_2_1_9"/>
<dbReference type="GO" id="GO:0005737">
    <property type="term" value="C:cytoplasm"/>
    <property type="evidence" value="ECO:0007669"/>
    <property type="project" value="UniProtKB-SubCell"/>
</dbReference>
<dbReference type="GO" id="GO:0051539">
    <property type="term" value="F:4 iron, 4 sulfur cluster binding"/>
    <property type="evidence" value="ECO:0007669"/>
    <property type="project" value="UniProtKB-UniRule"/>
</dbReference>
<dbReference type="GO" id="GO:0016992">
    <property type="term" value="F:lipoate synthase activity"/>
    <property type="evidence" value="ECO:0007669"/>
    <property type="project" value="UniProtKB-UniRule"/>
</dbReference>
<dbReference type="GO" id="GO:0046872">
    <property type="term" value="F:metal ion binding"/>
    <property type="evidence" value="ECO:0007669"/>
    <property type="project" value="UniProtKB-KW"/>
</dbReference>
<dbReference type="CDD" id="cd01335">
    <property type="entry name" value="Radical_SAM"/>
    <property type="match status" value="1"/>
</dbReference>
<dbReference type="FunFam" id="3.20.20.70:FF:000040">
    <property type="entry name" value="Lipoyl synthase"/>
    <property type="match status" value="1"/>
</dbReference>
<dbReference type="Gene3D" id="3.20.20.70">
    <property type="entry name" value="Aldolase class I"/>
    <property type="match status" value="1"/>
</dbReference>
<dbReference type="HAMAP" id="MF_00206">
    <property type="entry name" value="Lipoyl_synth"/>
    <property type="match status" value="1"/>
</dbReference>
<dbReference type="InterPro" id="IPR013785">
    <property type="entry name" value="Aldolase_TIM"/>
</dbReference>
<dbReference type="InterPro" id="IPR006638">
    <property type="entry name" value="Elp3/MiaA/NifB-like_rSAM"/>
</dbReference>
<dbReference type="InterPro" id="IPR031691">
    <property type="entry name" value="LIAS_N"/>
</dbReference>
<dbReference type="InterPro" id="IPR003698">
    <property type="entry name" value="Lipoyl_synth"/>
</dbReference>
<dbReference type="InterPro" id="IPR007197">
    <property type="entry name" value="rSAM"/>
</dbReference>
<dbReference type="NCBIfam" id="TIGR00510">
    <property type="entry name" value="lipA"/>
    <property type="match status" value="1"/>
</dbReference>
<dbReference type="NCBIfam" id="NF004019">
    <property type="entry name" value="PRK05481.1"/>
    <property type="match status" value="1"/>
</dbReference>
<dbReference type="NCBIfam" id="NF009544">
    <property type="entry name" value="PRK12928.1"/>
    <property type="match status" value="1"/>
</dbReference>
<dbReference type="PANTHER" id="PTHR10949">
    <property type="entry name" value="LIPOYL SYNTHASE"/>
    <property type="match status" value="1"/>
</dbReference>
<dbReference type="PANTHER" id="PTHR10949:SF0">
    <property type="entry name" value="LIPOYL SYNTHASE, MITOCHONDRIAL"/>
    <property type="match status" value="1"/>
</dbReference>
<dbReference type="Pfam" id="PF16881">
    <property type="entry name" value="LIAS_N"/>
    <property type="match status" value="1"/>
</dbReference>
<dbReference type="Pfam" id="PF04055">
    <property type="entry name" value="Radical_SAM"/>
    <property type="match status" value="1"/>
</dbReference>
<dbReference type="PIRSF" id="PIRSF005963">
    <property type="entry name" value="Lipoyl_synth"/>
    <property type="match status" value="1"/>
</dbReference>
<dbReference type="SFLD" id="SFLDF00271">
    <property type="entry name" value="lipoyl_synthase"/>
    <property type="match status" value="1"/>
</dbReference>
<dbReference type="SFLD" id="SFLDG01058">
    <property type="entry name" value="lipoyl_synthase_like"/>
    <property type="match status" value="1"/>
</dbReference>
<dbReference type="SMART" id="SM00729">
    <property type="entry name" value="Elp3"/>
    <property type="match status" value="1"/>
</dbReference>
<dbReference type="SUPFAM" id="SSF102114">
    <property type="entry name" value="Radical SAM enzymes"/>
    <property type="match status" value="1"/>
</dbReference>
<dbReference type="PROSITE" id="PS51918">
    <property type="entry name" value="RADICAL_SAM"/>
    <property type="match status" value="1"/>
</dbReference>
<name>LIPA_BACAH</name>
<feature type="chain" id="PRO_0000325232" description="Lipoyl synthase">
    <location>
        <begin position="1"/>
        <end position="298"/>
    </location>
</feature>
<feature type="domain" description="Radical SAM core" evidence="2">
    <location>
        <begin position="53"/>
        <end position="269"/>
    </location>
</feature>
<feature type="binding site" evidence="1">
    <location>
        <position position="40"/>
    </location>
    <ligand>
        <name>[4Fe-4S] cluster</name>
        <dbReference type="ChEBI" id="CHEBI:49883"/>
        <label>1</label>
    </ligand>
</feature>
<feature type="binding site" evidence="1">
    <location>
        <position position="45"/>
    </location>
    <ligand>
        <name>[4Fe-4S] cluster</name>
        <dbReference type="ChEBI" id="CHEBI:49883"/>
        <label>1</label>
    </ligand>
</feature>
<feature type="binding site" evidence="1">
    <location>
        <position position="51"/>
    </location>
    <ligand>
        <name>[4Fe-4S] cluster</name>
        <dbReference type="ChEBI" id="CHEBI:49883"/>
        <label>1</label>
    </ligand>
</feature>
<feature type="binding site" evidence="1">
    <location>
        <position position="67"/>
    </location>
    <ligand>
        <name>[4Fe-4S] cluster</name>
        <dbReference type="ChEBI" id="CHEBI:49883"/>
        <label>2</label>
        <note>4Fe-4S-S-AdoMet</note>
    </ligand>
</feature>
<feature type="binding site" evidence="1">
    <location>
        <position position="71"/>
    </location>
    <ligand>
        <name>[4Fe-4S] cluster</name>
        <dbReference type="ChEBI" id="CHEBI:49883"/>
        <label>2</label>
        <note>4Fe-4S-S-AdoMet</note>
    </ligand>
</feature>
<feature type="binding site" evidence="1">
    <location>
        <position position="74"/>
    </location>
    <ligand>
        <name>[4Fe-4S] cluster</name>
        <dbReference type="ChEBI" id="CHEBI:49883"/>
        <label>2</label>
        <note>4Fe-4S-S-AdoMet</note>
    </ligand>
</feature>
<feature type="binding site" evidence="1">
    <location>
        <position position="280"/>
    </location>
    <ligand>
        <name>[4Fe-4S] cluster</name>
        <dbReference type="ChEBI" id="CHEBI:49883"/>
        <label>1</label>
    </ligand>
</feature>
<reference key="1">
    <citation type="journal article" date="2007" name="J. Bacteriol.">
        <title>The complete genome sequence of Bacillus thuringiensis Al Hakam.</title>
        <authorList>
            <person name="Challacombe J.F."/>
            <person name="Altherr M.R."/>
            <person name="Xie G."/>
            <person name="Bhotika S.S."/>
            <person name="Brown N."/>
            <person name="Bruce D."/>
            <person name="Campbell C.S."/>
            <person name="Campbell M.L."/>
            <person name="Chen J."/>
            <person name="Chertkov O."/>
            <person name="Cleland C."/>
            <person name="Dimitrijevic M."/>
            <person name="Doggett N.A."/>
            <person name="Fawcett J.J."/>
            <person name="Glavina T."/>
            <person name="Goodwin L.A."/>
            <person name="Green L.D."/>
            <person name="Han C.S."/>
            <person name="Hill K.K."/>
            <person name="Hitchcock P."/>
            <person name="Jackson P.J."/>
            <person name="Keim P."/>
            <person name="Kewalramani A.R."/>
            <person name="Longmire J."/>
            <person name="Lucas S."/>
            <person name="Malfatti S."/>
            <person name="Martinez D."/>
            <person name="McMurry K."/>
            <person name="Meincke L.J."/>
            <person name="Misra M."/>
            <person name="Moseman B.L."/>
            <person name="Mundt M."/>
            <person name="Munk A.C."/>
            <person name="Okinaka R.T."/>
            <person name="Parson-Quintana B."/>
            <person name="Reilly L.P."/>
            <person name="Richardson P."/>
            <person name="Robinson D.L."/>
            <person name="Saunders E."/>
            <person name="Tapia R."/>
            <person name="Tesmer J.G."/>
            <person name="Thayer N."/>
            <person name="Thompson L.S."/>
            <person name="Tice H."/>
            <person name="Ticknor L.O."/>
            <person name="Wills P.L."/>
            <person name="Gilna P."/>
            <person name="Brettin T.S."/>
        </authorList>
    </citation>
    <scope>NUCLEOTIDE SEQUENCE [LARGE SCALE GENOMIC DNA]</scope>
    <source>
        <strain>Al Hakam</strain>
    </source>
</reference>
<comment type="function">
    <text evidence="1">Catalyzes the radical-mediated insertion of two sulfur atoms into the C-6 and C-8 positions of the octanoyl moiety bound to the lipoyl domains of lipoate-dependent enzymes, thereby converting the octanoylated domains into lipoylated derivatives.</text>
</comment>
<comment type="catalytic activity">
    <reaction evidence="1">
        <text>[[Fe-S] cluster scaffold protein carrying a second [4Fe-4S](2+) cluster] + N(6)-octanoyl-L-lysyl-[protein] + 2 oxidized [2Fe-2S]-[ferredoxin] + 2 S-adenosyl-L-methionine + 4 H(+) = [[Fe-S] cluster scaffold protein] + N(6)-[(R)-dihydrolipoyl]-L-lysyl-[protein] + 4 Fe(3+) + 2 hydrogen sulfide + 2 5'-deoxyadenosine + 2 L-methionine + 2 reduced [2Fe-2S]-[ferredoxin]</text>
        <dbReference type="Rhea" id="RHEA:16585"/>
        <dbReference type="Rhea" id="RHEA-COMP:9928"/>
        <dbReference type="Rhea" id="RHEA-COMP:10000"/>
        <dbReference type="Rhea" id="RHEA-COMP:10001"/>
        <dbReference type="Rhea" id="RHEA-COMP:10475"/>
        <dbReference type="Rhea" id="RHEA-COMP:14568"/>
        <dbReference type="Rhea" id="RHEA-COMP:14569"/>
        <dbReference type="ChEBI" id="CHEBI:15378"/>
        <dbReference type="ChEBI" id="CHEBI:17319"/>
        <dbReference type="ChEBI" id="CHEBI:29034"/>
        <dbReference type="ChEBI" id="CHEBI:29919"/>
        <dbReference type="ChEBI" id="CHEBI:33722"/>
        <dbReference type="ChEBI" id="CHEBI:33737"/>
        <dbReference type="ChEBI" id="CHEBI:33738"/>
        <dbReference type="ChEBI" id="CHEBI:57844"/>
        <dbReference type="ChEBI" id="CHEBI:59789"/>
        <dbReference type="ChEBI" id="CHEBI:78809"/>
        <dbReference type="ChEBI" id="CHEBI:83100"/>
        <dbReference type="EC" id="2.8.1.8"/>
    </reaction>
</comment>
<comment type="cofactor">
    <cofactor evidence="1">
        <name>[4Fe-4S] cluster</name>
        <dbReference type="ChEBI" id="CHEBI:49883"/>
    </cofactor>
    <text evidence="1">Binds 2 [4Fe-4S] clusters per subunit. One cluster is coordinated with 3 cysteines and an exchangeable S-adenosyl-L-methionine.</text>
</comment>
<comment type="pathway">
    <text evidence="1">Protein modification; protein lipoylation via endogenous pathway; protein N(6)-(lipoyl)lysine from octanoyl-[acyl-carrier-protein].</text>
</comment>
<comment type="subcellular location">
    <subcellularLocation>
        <location evidence="1">Cytoplasm</location>
    </subcellularLocation>
</comment>
<comment type="similarity">
    <text evidence="1">Belongs to the radical SAM superfamily. Lipoyl synthase family.</text>
</comment>
<comment type="sequence caution" evidence="3">
    <conflict type="erroneous initiation">
        <sequence resource="EMBL-CDS" id="ABK87700"/>
    </conflict>
</comment>
<gene>
    <name evidence="1" type="primary">lipA</name>
    <name type="ordered locus">BALH_4504</name>
</gene>
<sequence length="298" mass="33702">MTKQTEYKRKPEWLKIKLNTNENYTGLKKMMRSKNLHTVCEEAKCPNIHECWAVRKTATFMILGAVCTRACRFCAVKTGLPTELDLQEPERVADSVVQMGLKHVVITAVARDDLKDGGAAVFAETVRAVRRKNPFTSIEVLPSDMGGVEENLKMLMDAKPDILNHNIETVRRLSDRVRARAKYDRSLEFLRRAKEMQPDIPTKSSIMVGLGETREDLIEAMDDLRANNVDILTLGQYLQPSKKHLPVLKYYPPAEFAELKEIALSKGFSHCEAGPLVRSSYHADEQVRSAKEKTAEAK</sequence>
<proteinExistence type="inferred from homology"/>